<keyword id="KW-0028">Amino-acid biosynthesis</keyword>
<keyword id="KW-0067">ATP-binding</keyword>
<keyword id="KW-0963">Cytoplasm</keyword>
<keyword id="KW-0368">Histidine biosynthesis</keyword>
<keyword id="KW-0378">Hydrolase</keyword>
<keyword id="KW-0547">Nucleotide-binding</keyword>
<comment type="catalytic activity">
    <reaction evidence="1">
        <text>1-(5-phospho-beta-D-ribosyl)-ATP + H2O = 1-(5-phospho-beta-D-ribosyl)-5'-AMP + diphosphate + H(+)</text>
        <dbReference type="Rhea" id="RHEA:22828"/>
        <dbReference type="ChEBI" id="CHEBI:15377"/>
        <dbReference type="ChEBI" id="CHEBI:15378"/>
        <dbReference type="ChEBI" id="CHEBI:33019"/>
        <dbReference type="ChEBI" id="CHEBI:59457"/>
        <dbReference type="ChEBI" id="CHEBI:73183"/>
        <dbReference type="EC" id="3.6.1.31"/>
    </reaction>
</comment>
<comment type="pathway">
    <text evidence="1">Amino-acid biosynthesis; L-histidine biosynthesis; L-histidine from 5-phospho-alpha-D-ribose 1-diphosphate: step 2/9.</text>
</comment>
<comment type="subcellular location">
    <subcellularLocation>
        <location evidence="1">Cytoplasm</location>
    </subcellularLocation>
</comment>
<comment type="similarity">
    <text evidence="1">Belongs to the PRA-PH family.</text>
</comment>
<protein>
    <recommendedName>
        <fullName evidence="1">Phosphoribosyl-ATP pyrophosphatase</fullName>
        <shortName evidence="1">PRA-PH</shortName>
        <ecNumber evidence="1">3.6.1.31</ecNumber>
    </recommendedName>
</protein>
<name>HIS2_METS3</name>
<reference key="1">
    <citation type="journal article" date="2007" name="Proc. Natl. Acad. Sci. U.S.A.">
        <title>Genomic and metabolic adaptations of Methanobrevibacter smithii to the human gut.</title>
        <authorList>
            <person name="Samuel B.S."/>
            <person name="Hansen E.E."/>
            <person name="Manchester J.K."/>
            <person name="Coutinho P.M."/>
            <person name="Henrissat B."/>
            <person name="Fulton R."/>
            <person name="Latreille P."/>
            <person name="Kim K."/>
            <person name="Wilson R.K."/>
            <person name="Gordon J.I."/>
        </authorList>
    </citation>
    <scope>NUCLEOTIDE SEQUENCE [LARGE SCALE GENOMIC DNA]</scope>
    <source>
        <strain>ATCC 35061 / DSM 861 / OCM 144 / PS</strain>
    </source>
</reference>
<evidence type="ECO:0000255" key="1">
    <source>
        <dbReference type="HAMAP-Rule" id="MF_01020"/>
    </source>
</evidence>
<dbReference type="EC" id="3.6.1.31" evidence="1"/>
<dbReference type="EMBL" id="CP000678">
    <property type="protein sequence ID" value="ABQ87308.1"/>
    <property type="molecule type" value="Genomic_DNA"/>
</dbReference>
<dbReference type="RefSeq" id="WP_004032834.1">
    <property type="nucleotide sequence ID" value="NZ_CP117965.1"/>
</dbReference>
<dbReference type="SMR" id="A5UM80"/>
<dbReference type="STRING" id="420247.Msm_1103"/>
<dbReference type="EnsemblBacteria" id="ABQ87308">
    <property type="protein sequence ID" value="ABQ87308"/>
    <property type="gene ID" value="Msm_1103"/>
</dbReference>
<dbReference type="GeneID" id="78817748"/>
<dbReference type="KEGG" id="msi:Msm_1103"/>
<dbReference type="PATRIC" id="fig|420247.28.peg.1102"/>
<dbReference type="eggNOG" id="arCOG02677">
    <property type="taxonomic scope" value="Archaea"/>
</dbReference>
<dbReference type="HOGENOM" id="CLU_123337_0_0_2"/>
<dbReference type="UniPathway" id="UPA00031">
    <property type="reaction ID" value="UER00007"/>
</dbReference>
<dbReference type="Proteomes" id="UP000001992">
    <property type="component" value="Chromosome"/>
</dbReference>
<dbReference type="GO" id="GO:0005737">
    <property type="term" value="C:cytoplasm"/>
    <property type="evidence" value="ECO:0007669"/>
    <property type="project" value="UniProtKB-SubCell"/>
</dbReference>
<dbReference type="GO" id="GO:0005524">
    <property type="term" value="F:ATP binding"/>
    <property type="evidence" value="ECO:0007669"/>
    <property type="project" value="UniProtKB-KW"/>
</dbReference>
<dbReference type="GO" id="GO:0004636">
    <property type="term" value="F:phosphoribosyl-ATP diphosphatase activity"/>
    <property type="evidence" value="ECO:0007669"/>
    <property type="project" value="UniProtKB-UniRule"/>
</dbReference>
<dbReference type="GO" id="GO:0000105">
    <property type="term" value="P:L-histidine biosynthetic process"/>
    <property type="evidence" value="ECO:0007669"/>
    <property type="project" value="UniProtKB-UniRule"/>
</dbReference>
<dbReference type="CDD" id="cd11534">
    <property type="entry name" value="NTP-PPase_HisIE_like"/>
    <property type="match status" value="1"/>
</dbReference>
<dbReference type="Gene3D" id="1.10.287.1080">
    <property type="entry name" value="MazG-like"/>
    <property type="match status" value="1"/>
</dbReference>
<dbReference type="HAMAP" id="MF_01020">
    <property type="entry name" value="HisE"/>
    <property type="match status" value="1"/>
</dbReference>
<dbReference type="InterPro" id="IPR008179">
    <property type="entry name" value="HisE"/>
</dbReference>
<dbReference type="InterPro" id="IPR021130">
    <property type="entry name" value="PRib-ATP_PPHydrolase-like"/>
</dbReference>
<dbReference type="NCBIfam" id="TIGR03188">
    <property type="entry name" value="histidine_hisI"/>
    <property type="match status" value="1"/>
</dbReference>
<dbReference type="PANTHER" id="PTHR42945">
    <property type="entry name" value="HISTIDINE BIOSYNTHESIS BIFUNCTIONAL PROTEIN"/>
    <property type="match status" value="1"/>
</dbReference>
<dbReference type="PANTHER" id="PTHR42945:SF1">
    <property type="entry name" value="HISTIDINE BIOSYNTHESIS BIFUNCTIONAL PROTEIN HIS7"/>
    <property type="match status" value="1"/>
</dbReference>
<dbReference type="Pfam" id="PF01503">
    <property type="entry name" value="PRA-PH"/>
    <property type="match status" value="1"/>
</dbReference>
<dbReference type="SUPFAM" id="SSF101386">
    <property type="entry name" value="all-alpha NTP pyrophosphatases"/>
    <property type="match status" value="1"/>
</dbReference>
<accession>A5UM80</accession>
<sequence>MASEEIIREVYKVLEERRDNPIDSYTSKIMQDSDKKAEDKILEKVAEECGEVLLAAKNDENLVYESVDLIFHTLLILVYKGIEIDEIFEEFARRRH</sequence>
<proteinExistence type="inferred from homology"/>
<organism>
    <name type="scientific">Methanobrevibacter smithii (strain ATCC 35061 / DSM 861 / OCM 144 / PS)</name>
    <dbReference type="NCBI Taxonomy" id="420247"/>
    <lineage>
        <taxon>Archaea</taxon>
        <taxon>Methanobacteriati</taxon>
        <taxon>Methanobacteriota</taxon>
        <taxon>Methanomada group</taxon>
        <taxon>Methanobacteria</taxon>
        <taxon>Methanobacteriales</taxon>
        <taxon>Methanobacteriaceae</taxon>
        <taxon>Methanobrevibacter</taxon>
    </lineage>
</organism>
<gene>
    <name evidence="1" type="primary">hisE</name>
    <name type="ordered locus">Msm_1103</name>
</gene>
<feature type="chain" id="PRO_1000063352" description="Phosphoribosyl-ATP pyrophosphatase">
    <location>
        <begin position="1"/>
        <end position="96"/>
    </location>
</feature>